<proteinExistence type="evidence at protein level"/>
<organism>
    <name type="scientific">Gallus gallus</name>
    <name type="common">Chicken</name>
    <dbReference type="NCBI Taxonomy" id="9031"/>
    <lineage>
        <taxon>Eukaryota</taxon>
        <taxon>Metazoa</taxon>
        <taxon>Chordata</taxon>
        <taxon>Craniata</taxon>
        <taxon>Vertebrata</taxon>
        <taxon>Euteleostomi</taxon>
        <taxon>Archelosauria</taxon>
        <taxon>Archosauria</taxon>
        <taxon>Dinosauria</taxon>
        <taxon>Saurischia</taxon>
        <taxon>Theropoda</taxon>
        <taxon>Coelurosauria</taxon>
        <taxon>Aves</taxon>
        <taxon>Neognathae</taxon>
        <taxon>Galloanserae</taxon>
        <taxon>Galliformes</taxon>
        <taxon>Phasianidae</taxon>
        <taxon>Phasianinae</taxon>
        <taxon>Gallus</taxon>
    </lineage>
</organism>
<reference key="1">
    <citation type="journal article" date="1985" name="J. Biol. Chem.">
        <title>The primary structure of the precursor of chicken mitochondrial aspartate aminotransferase. Cloning and sequence analysis of cDNA.</title>
        <authorList>
            <person name="Jaussi R."/>
            <person name="Cotton B."/>
            <person name="Juretic N."/>
            <person name="Christen P."/>
            <person name="Schumperli D."/>
        </authorList>
    </citation>
    <scope>NUCLEOTIDE SEQUENCE [MRNA]</scope>
</reference>
<reference key="2">
    <citation type="journal article" date="1983" name="J. Biol. Chem.">
        <title>The covalent structure of mitochondrial aspartate aminotransferase from chicken. Identification of segments of the polypeptide chain invariant specifically in the mitochondrial isoenzyme.</title>
        <authorList>
            <person name="Graf-Hausner U."/>
            <person name="Wilson K.J."/>
            <person name="Christen P."/>
        </authorList>
    </citation>
    <scope>PROTEIN SEQUENCE OF 23-423</scope>
</reference>
<reference key="3">
    <citation type="journal article" date="1990" name="Eur. J. Biochem.">
        <title>Structure of the genes of two homologous intracellularly heterotopic isoenzymes. Cytosolic and mitochondrial aspartate aminotransferase of chicken.</title>
        <authorList>
            <person name="Juretic N."/>
            <person name="Mattes U."/>
            <person name="Ziak M."/>
            <person name="Christen P."/>
            <person name="Jaussi R."/>
        </authorList>
    </citation>
    <scope>GENE STRUCTURE</scope>
    <source>
        <strain>White leghorn</strain>
    </source>
</reference>
<reference key="4">
    <citation type="journal article" date="1992" name="J. Mol. Biol.">
        <title>X-ray structure refinement and comparison of three forms of mitochondrial aspartate aminotransferase.</title>
        <authorList>
            <person name="McPhalen C.A."/>
            <person name="Vincent M.G."/>
            <person name="Jansonius J.N."/>
        </authorList>
    </citation>
    <scope>X-RAY CRYSTALLOGRAPHY (1.9 ANGSTROMS) IN COMPLEXES WITH PYRIDOXAL PHOSPHATE</scope>
    <scope>PYRIDOXAL PHOSPHATE AT LYS-272</scope>
    <scope>COFACTOR</scope>
    <scope>SUBUNIT</scope>
</reference>
<reference key="5">
    <citation type="journal article" date="1993" name="Biochemistry">
        <title>Crystal structures of true enzymatic reaction intermediates: aspartate and glutamate ketimines in aspartate aminotransferase.</title>
        <authorList>
            <person name="Malashkevich V.N."/>
            <person name="Toney M.D."/>
            <person name="Jansonius J.N."/>
        </authorList>
    </citation>
    <scope>X-RAY CRYSTALLOGRAPHY (2.4 ANGSTROMS) OF 23-423 IN COMPLEXES WITH PYRIDOXAL PHOSPHATE; L-ASPARTATE AND L-GLUTAMATE</scope>
    <scope>COFACTOR</scope>
    <scope>SUBUNIT</scope>
</reference>
<reference key="6">
    <citation type="journal article" date="1996" name="Biochemistry">
        <title>Aspartate aminotransferase complexed with erythro-beta-hydroxyaspartate: crystallographic and spectroscopic identification of the carbinolamine intermediate.</title>
        <authorList>
            <person name="von Stosch A.G."/>
        </authorList>
    </citation>
    <scope>X-RAY CRYSTALLOGRAPHY (2.4 ANGSTROMS) OF 23-423 IN COMPLEX WITH ERYTHRO-BETA-HYDROXYASPARTATE</scope>
    <scope>COFACTOR</scope>
</reference>
<reference key="7">
    <citation type="journal article" date="1996" name="Eur. J. Biochem.">
        <title>Crystal structures and solution studies of oxime adducts of mitochondrial aspartate aminotransferase.</title>
        <authorList>
            <person name="Markovic-Housley Z."/>
            <person name="Schirmer T."/>
            <person name="Hohenester E."/>
            <person name="Khomutov A.R."/>
            <person name="Khomutov R.M."/>
            <person name="Karpeisky M.Y."/>
            <person name="Sandmeier E."/>
            <person name="Christen P."/>
            <person name="Jansonius J.N."/>
        </authorList>
    </citation>
    <scope>X-RAY CRYSTALLOGRAPHY (2.3 ANGSTROMS) OF 23-423 IN COMPLEXES WITH PYRIDOXAL PHOSPHATE AND SUBSTRATE ANALOGS</scope>
    <scope>COFACTOR</scope>
    <scope>SUBCELLULAR LOCATION</scope>
    <scope>TISSUE SPECIFICITY</scope>
    <scope>SUBUNIT</scope>
</reference>
<dbReference type="EC" id="2.6.1.1" evidence="2"/>
<dbReference type="EC" id="2.6.1.7" evidence="2"/>
<dbReference type="EMBL" id="M12105">
    <property type="protein sequence ID" value="AAA48603.1"/>
    <property type="molecule type" value="mRNA"/>
</dbReference>
<dbReference type="PIR" id="A24554">
    <property type="entry name" value="XNCHDM"/>
</dbReference>
<dbReference type="RefSeq" id="NP_990854.1">
    <property type="nucleotide sequence ID" value="NM_205523.1"/>
</dbReference>
<dbReference type="PDB" id="1AKA">
    <property type="method" value="X-ray"/>
    <property type="resolution" value="2.10 A"/>
    <property type="chains" value="A/B=23-423"/>
</dbReference>
<dbReference type="PDB" id="1AKB">
    <property type="method" value="X-ray"/>
    <property type="resolution" value="2.30 A"/>
    <property type="chains" value="A=23-423"/>
</dbReference>
<dbReference type="PDB" id="1AKC">
    <property type="method" value="X-ray"/>
    <property type="resolution" value="2.30 A"/>
    <property type="chains" value="A=23-423"/>
</dbReference>
<dbReference type="PDB" id="1AMA">
    <property type="method" value="X-ray"/>
    <property type="resolution" value="2.30 A"/>
    <property type="chains" value="A=23-423"/>
</dbReference>
<dbReference type="PDB" id="1IVR">
    <property type="method" value="X-ray"/>
    <property type="resolution" value="2.40 A"/>
    <property type="chains" value="A=23-423"/>
</dbReference>
<dbReference type="PDB" id="1MAP">
    <property type="method" value="X-ray"/>
    <property type="resolution" value="2.40 A"/>
    <property type="chains" value="A=23-423"/>
</dbReference>
<dbReference type="PDB" id="1MAQ">
    <property type="method" value="X-ray"/>
    <property type="resolution" value="2.30 A"/>
    <property type="chains" value="A=23-423"/>
</dbReference>
<dbReference type="PDB" id="1OXO">
    <property type="method" value="X-ray"/>
    <property type="resolution" value="2.30 A"/>
    <property type="chains" value="A/B=23-423"/>
</dbReference>
<dbReference type="PDB" id="1OXP">
    <property type="method" value="X-ray"/>
    <property type="resolution" value="2.50 A"/>
    <property type="chains" value="A=23-423"/>
</dbReference>
<dbReference type="PDB" id="1TAR">
    <property type="method" value="X-ray"/>
    <property type="resolution" value="2.20 A"/>
    <property type="chains" value="A/B=23-423"/>
</dbReference>
<dbReference type="PDB" id="1TAS">
    <property type="method" value="X-ray"/>
    <property type="resolution" value="2.80 A"/>
    <property type="chains" value="A/B=23-423"/>
</dbReference>
<dbReference type="PDB" id="1TAT">
    <property type="method" value="X-ray"/>
    <property type="resolution" value="3.00 A"/>
    <property type="chains" value="A/B=23-423"/>
</dbReference>
<dbReference type="PDB" id="7AAT">
    <property type="method" value="X-ray"/>
    <property type="resolution" value="1.90 A"/>
    <property type="chains" value="A/B=23-423"/>
</dbReference>
<dbReference type="PDB" id="8AAT">
    <property type="method" value="X-ray"/>
    <property type="resolution" value="2.30 A"/>
    <property type="chains" value="A/B=23-423"/>
</dbReference>
<dbReference type="PDB" id="9AAT">
    <property type="method" value="X-ray"/>
    <property type="resolution" value="2.20 A"/>
    <property type="chains" value="A/B=23-423"/>
</dbReference>
<dbReference type="PDBsum" id="1AKA"/>
<dbReference type="PDBsum" id="1AKB"/>
<dbReference type="PDBsum" id="1AKC"/>
<dbReference type="PDBsum" id="1AMA"/>
<dbReference type="PDBsum" id="1IVR"/>
<dbReference type="PDBsum" id="1MAP"/>
<dbReference type="PDBsum" id="1MAQ"/>
<dbReference type="PDBsum" id="1OXO"/>
<dbReference type="PDBsum" id="1OXP"/>
<dbReference type="PDBsum" id="1TAR"/>
<dbReference type="PDBsum" id="1TAS"/>
<dbReference type="PDBsum" id="1TAT"/>
<dbReference type="PDBsum" id="7AAT"/>
<dbReference type="PDBsum" id="8AAT"/>
<dbReference type="PDBsum" id="9AAT"/>
<dbReference type="SMR" id="P00508"/>
<dbReference type="BioGRID" id="676777">
    <property type="interactions" value="1"/>
</dbReference>
<dbReference type="FunCoup" id="P00508">
    <property type="interactions" value="2751"/>
</dbReference>
<dbReference type="IntAct" id="P00508">
    <property type="interactions" value="1"/>
</dbReference>
<dbReference type="STRING" id="9031.ENSGALP00000060782"/>
<dbReference type="PaxDb" id="9031-ENSGALP00000003646"/>
<dbReference type="GeneID" id="396533"/>
<dbReference type="KEGG" id="gga:396533"/>
<dbReference type="CTD" id="2806"/>
<dbReference type="VEuPathDB" id="HostDB:geneid_396533"/>
<dbReference type="eggNOG" id="KOG1411">
    <property type="taxonomic scope" value="Eukaryota"/>
</dbReference>
<dbReference type="InParanoid" id="P00508"/>
<dbReference type="OrthoDB" id="6752799at2759"/>
<dbReference type="PhylomeDB" id="P00508"/>
<dbReference type="Reactome" id="R-GGA-352875">
    <property type="pathway name" value="Gluconeogenesis"/>
</dbReference>
<dbReference type="Reactome" id="R-GGA-372568">
    <property type="pathway name" value="Amino acid metabolism"/>
</dbReference>
<dbReference type="EvolutionaryTrace" id="P00508"/>
<dbReference type="PRO" id="PR:P00508"/>
<dbReference type="Proteomes" id="UP000000539">
    <property type="component" value="Unassembled WGS sequence"/>
</dbReference>
<dbReference type="GO" id="GO:0005759">
    <property type="term" value="C:mitochondrial matrix"/>
    <property type="evidence" value="ECO:0000304"/>
    <property type="project" value="Reactome"/>
</dbReference>
<dbReference type="GO" id="GO:0005739">
    <property type="term" value="C:mitochondrion"/>
    <property type="evidence" value="ECO:0000314"/>
    <property type="project" value="UniProtKB"/>
</dbReference>
<dbReference type="GO" id="GO:0016212">
    <property type="term" value="F:kynurenine-oxoglutarate transaminase activity"/>
    <property type="evidence" value="ECO:0007669"/>
    <property type="project" value="UniProtKB-EC"/>
</dbReference>
<dbReference type="GO" id="GO:0004069">
    <property type="term" value="F:L-aspartate:2-oxoglutarate aminotransferase activity"/>
    <property type="evidence" value="ECO:0000314"/>
    <property type="project" value="UniProtKB"/>
</dbReference>
<dbReference type="GO" id="GO:0042803">
    <property type="term" value="F:protein homodimerization activity"/>
    <property type="evidence" value="ECO:0000353"/>
    <property type="project" value="UniProtKB"/>
</dbReference>
<dbReference type="GO" id="GO:0030170">
    <property type="term" value="F:pyridoxal phosphate binding"/>
    <property type="evidence" value="ECO:0007669"/>
    <property type="project" value="InterPro"/>
</dbReference>
<dbReference type="GO" id="GO:0006103">
    <property type="term" value="P:2-oxoglutarate metabolic process"/>
    <property type="evidence" value="ECO:0000314"/>
    <property type="project" value="UniProtKB"/>
</dbReference>
<dbReference type="GO" id="GO:0006533">
    <property type="term" value="P:aspartate catabolic process"/>
    <property type="evidence" value="ECO:0000318"/>
    <property type="project" value="GO_Central"/>
</dbReference>
<dbReference type="GO" id="GO:0006531">
    <property type="term" value="P:aspartate metabolic process"/>
    <property type="evidence" value="ECO:0000314"/>
    <property type="project" value="UniProtKB"/>
</dbReference>
<dbReference type="GO" id="GO:0009058">
    <property type="term" value="P:biosynthetic process"/>
    <property type="evidence" value="ECO:0007669"/>
    <property type="project" value="InterPro"/>
</dbReference>
<dbReference type="GO" id="GO:0006536">
    <property type="term" value="P:glutamate metabolic process"/>
    <property type="evidence" value="ECO:0000314"/>
    <property type="project" value="UniProtKB"/>
</dbReference>
<dbReference type="CDD" id="cd00609">
    <property type="entry name" value="AAT_like"/>
    <property type="match status" value="1"/>
</dbReference>
<dbReference type="FunFam" id="3.40.640.10:FF:000026">
    <property type="entry name" value="Aspartate aminotransferase"/>
    <property type="match status" value="1"/>
</dbReference>
<dbReference type="FunFam" id="3.90.1150.10:FF:000001">
    <property type="entry name" value="Aspartate aminotransferase"/>
    <property type="match status" value="1"/>
</dbReference>
<dbReference type="FunFam" id="3.90.1150.10:FF:000160">
    <property type="entry name" value="Similar to aspartate aminotransferase"/>
    <property type="match status" value="1"/>
</dbReference>
<dbReference type="Gene3D" id="3.90.1150.10">
    <property type="entry name" value="Aspartate Aminotransferase, domain 1"/>
    <property type="match status" value="1"/>
</dbReference>
<dbReference type="Gene3D" id="3.40.640.10">
    <property type="entry name" value="Type I PLP-dependent aspartate aminotransferase-like (Major domain)"/>
    <property type="match status" value="1"/>
</dbReference>
<dbReference type="InterPro" id="IPR004839">
    <property type="entry name" value="Aminotransferase_I/II_large"/>
</dbReference>
<dbReference type="InterPro" id="IPR000796">
    <property type="entry name" value="Asp_trans"/>
</dbReference>
<dbReference type="InterPro" id="IPR004838">
    <property type="entry name" value="NHTrfase_class1_PyrdxlP-BS"/>
</dbReference>
<dbReference type="InterPro" id="IPR015424">
    <property type="entry name" value="PyrdxlP-dep_Trfase"/>
</dbReference>
<dbReference type="InterPro" id="IPR015421">
    <property type="entry name" value="PyrdxlP-dep_Trfase_major"/>
</dbReference>
<dbReference type="InterPro" id="IPR015422">
    <property type="entry name" value="PyrdxlP-dep_Trfase_small"/>
</dbReference>
<dbReference type="NCBIfam" id="NF006719">
    <property type="entry name" value="PRK09257.1"/>
    <property type="match status" value="1"/>
</dbReference>
<dbReference type="PANTHER" id="PTHR11879">
    <property type="entry name" value="ASPARTATE AMINOTRANSFERASE"/>
    <property type="match status" value="1"/>
</dbReference>
<dbReference type="PANTHER" id="PTHR11879:SF22">
    <property type="entry name" value="ASPARTATE AMINOTRANSFERASE, MITOCHONDRIAL"/>
    <property type="match status" value="1"/>
</dbReference>
<dbReference type="Pfam" id="PF00155">
    <property type="entry name" value="Aminotran_1_2"/>
    <property type="match status" value="1"/>
</dbReference>
<dbReference type="PRINTS" id="PR00799">
    <property type="entry name" value="TRANSAMINASE"/>
</dbReference>
<dbReference type="SUPFAM" id="SSF53383">
    <property type="entry name" value="PLP-dependent transferases"/>
    <property type="match status" value="1"/>
</dbReference>
<dbReference type="PROSITE" id="PS00105">
    <property type="entry name" value="AA_TRANSFER_CLASS_1"/>
    <property type="match status" value="1"/>
</dbReference>
<evidence type="ECO:0000250" key="1">
    <source>
        <dbReference type="UniProtKB" id="P00505"/>
    </source>
</evidence>
<evidence type="ECO:0000250" key="2">
    <source>
        <dbReference type="UniProtKB" id="P00507"/>
    </source>
</evidence>
<evidence type="ECO:0000269" key="3">
    <source>
    </source>
</evidence>
<evidence type="ECO:0000269" key="4">
    <source>
    </source>
</evidence>
<evidence type="ECO:0000269" key="5">
    <source>
    </source>
</evidence>
<evidence type="ECO:0000269" key="6">
    <source>
    </source>
</evidence>
<evidence type="ECO:0000269" key="7">
    <source>
    </source>
</evidence>
<evidence type="ECO:0000305" key="8"/>
<evidence type="ECO:0007829" key="9">
    <source>
        <dbReference type="PDB" id="1AKA"/>
    </source>
</evidence>
<evidence type="ECO:0007829" key="10">
    <source>
        <dbReference type="PDB" id="1OXP"/>
    </source>
</evidence>
<evidence type="ECO:0007829" key="11">
    <source>
        <dbReference type="PDB" id="1TAT"/>
    </source>
</evidence>
<evidence type="ECO:0007829" key="12">
    <source>
        <dbReference type="PDB" id="7AAT"/>
    </source>
</evidence>
<accession>P00508</accession>
<protein>
    <recommendedName>
        <fullName>Aspartate aminotransferase, mitochondrial</fullName>
        <shortName>mAspAT</shortName>
        <ecNumber evidence="2">2.6.1.1</ecNumber>
        <ecNumber evidence="2">2.6.1.7</ecNumber>
    </recommendedName>
    <alternativeName>
        <fullName>Glutamate oxaloacetate transaminase 2</fullName>
    </alternativeName>
    <alternativeName>
        <fullName>Kynurenine aminotransferase 4</fullName>
    </alternativeName>
    <alternativeName>
        <fullName>Kynurenine aminotransferase IV</fullName>
    </alternativeName>
    <alternativeName>
        <fullName>Kynurenine--oxoglutarate transaminase 4</fullName>
    </alternativeName>
    <alternativeName>
        <fullName>Kynurenine--oxoglutarate transaminase IV</fullName>
    </alternativeName>
    <alternativeName>
        <fullName>Transaminase A</fullName>
    </alternativeName>
</protein>
<feature type="transit peptide" description="Mitochondrion" evidence="4">
    <location>
        <begin position="1"/>
        <end position="22"/>
    </location>
</feature>
<feature type="chain" id="PRO_0000001219" description="Aspartate aminotransferase, mitochondrial">
    <location>
        <begin position="23"/>
        <end position="423"/>
    </location>
</feature>
<feature type="binding site">
    <location>
        <position position="58"/>
    </location>
    <ligand>
        <name>substrate</name>
    </ligand>
</feature>
<feature type="binding site">
    <location>
        <position position="155"/>
    </location>
    <ligand>
        <name>substrate</name>
    </ligand>
</feature>
<feature type="binding site">
    <location>
        <position position="208"/>
    </location>
    <ligand>
        <name>substrate</name>
    </ligand>
</feature>
<feature type="binding site">
    <location>
        <position position="400"/>
    </location>
    <ligand>
        <name>substrate</name>
    </ligand>
</feature>
<feature type="modified residue" description="N6-(pyridoxal phosphate)lysine">
    <location>
        <position position="272"/>
    </location>
</feature>
<feature type="sequence conflict" description="In Ref. 2; AA sequence." evidence="8" ref="2">
    <original>S</original>
    <variation>P</variation>
    <location>
        <position position="67"/>
    </location>
</feature>
<feature type="sequence conflict" description="In Ref. 2; AA sequence." evidence="8" ref="2">
    <original>Q</original>
    <variation>E</variation>
    <location>
        <position position="168"/>
    </location>
</feature>
<feature type="sequence conflict" description="In Ref. 2; AA sequence." evidence="8" ref="2">
    <original>Q</original>
    <variation>E</variation>
    <location>
        <position position="216"/>
    </location>
</feature>
<feature type="turn" evidence="9">
    <location>
        <begin position="25"/>
        <end position="28"/>
    </location>
</feature>
<feature type="helix" evidence="12">
    <location>
        <begin position="36"/>
        <end position="46"/>
    </location>
</feature>
<feature type="strand" evidence="10">
    <location>
        <begin position="56"/>
        <end position="58"/>
    </location>
</feature>
<feature type="turn" evidence="11">
    <location>
        <begin position="63"/>
        <end position="65"/>
    </location>
</feature>
<feature type="helix" evidence="12">
    <location>
        <begin position="71"/>
        <end position="82"/>
    </location>
</feature>
<feature type="helix" evidence="12">
    <location>
        <begin position="96"/>
        <end position="107"/>
    </location>
</feature>
<feature type="helix" evidence="12">
    <location>
        <begin position="112"/>
        <end position="115"/>
    </location>
</feature>
<feature type="strand" evidence="12">
    <location>
        <begin position="119"/>
        <end position="125"/>
    </location>
</feature>
<feature type="helix" evidence="12">
    <location>
        <begin position="126"/>
        <end position="141"/>
    </location>
</feature>
<feature type="strand" evidence="12">
    <location>
        <begin position="147"/>
        <end position="153"/>
    </location>
</feature>
<feature type="helix" evidence="12">
    <location>
        <begin position="158"/>
        <end position="164"/>
    </location>
</feature>
<feature type="strand" evidence="12">
    <location>
        <begin position="168"/>
        <end position="173"/>
    </location>
</feature>
<feature type="turn" evidence="12">
    <location>
        <begin position="177"/>
        <end position="180"/>
    </location>
</feature>
<feature type="helix" evidence="12">
    <location>
        <begin position="184"/>
        <end position="191"/>
    </location>
</feature>
<feature type="strand" evidence="12">
    <location>
        <begin position="199"/>
        <end position="206"/>
    </location>
</feature>
<feature type="turn" evidence="12">
    <location>
        <begin position="208"/>
        <end position="210"/>
    </location>
</feature>
<feature type="helix" evidence="12">
    <location>
        <begin position="216"/>
        <end position="228"/>
    </location>
</feature>
<feature type="strand" evidence="12">
    <location>
        <begin position="232"/>
        <end position="238"/>
    </location>
</feature>
<feature type="turn" evidence="12">
    <location>
        <begin position="240"/>
        <end position="244"/>
    </location>
</feature>
<feature type="helix" evidence="12">
    <location>
        <begin position="247"/>
        <end position="250"/>
    </location>
</feature>
<feature type="helix" evidence="12">
    <location>
        <begin position="252"/>
        <end position="259"/>
    </location>
</feature>
<feature type="strand" evidence="12">
    <location>
        <begin position="265"/>
        <end position="269"/>
    </location>
</feature>
<feature type="turn" evidence="12">
    <location>
        <begin position="271"/>
        <end position="273"/>
    </location>
</feature>
<feature type="helix" evidence="12">
    <location>
        <begin position="277"/>
        <end position="279"/>
    </location>
</feature>
<feature type="strand" evidence="12">
    <location>
        <begin position="281"/>
        <end position="287"/>
    </location>
</feature>
<feature type="helix" evidence="12">
    <location>
        <begin position="291"/>
        <end position="309"/>
    </location>
</feature>
<feature type="helix" evidence="12">
    <location>
        <begin position="314"/>
        <end position="325"/>
    </location>
</feature>
<feature type="helix" evidence="12">
    <location>
        <begin position="327"/>
        <end position="357"/>
    </location>
</feature>
<feature type="helix" evidence="12">
    <location>
        <begin position="365"/>
        <end position="369"/>
    </location>
</feature>
<feature type="strand" evidence="12">
    <location>
        <begin position="372"/>
        <end position="376"/>
    </location>
</feature>
<feature type="helix" evidence="12">
    <location>
        <begin position="381"/>
        <end position="391"/>
    </location>
</feature>
<feature type="turn" evidence="9">
    <location>
        <begin position="397"/>
        <end position="399"/>
    </location>
</feature>
<feature type="strand" evidence="12">
    <location>
        <begin position="400"/>
        <end position="402"/>
    </location>
</feature>
<feature type="helix" evidence="12">
    <location>
        <begin position="403"/>
        <end position="405"/>
    </location>
</feature>
<feature type="turn" evidence="12">
    <location>
        <begin position="408"/>
        <end position="410"/>
    </location>
</feature>
<feature type="helix" evidence="12">
    <location>
        <begin position="411"/>
        <end position="422"/>
    </location>
</feature>
<keyword id="KW-0002">3D-structure</keyword>
<keyword id="KW-0032">Aminotransferase</keyword>
<keyword id="KW-0903">Direct protein sequencing</keyword>
<keyword id="KW-0496">Mitochondrion</keyword>
<keyword id="KW-0663">Pyridoxal phosphate</keyword>
<keyword id="KW-1185">Reference proteome</keyword>
<keyword id="KW-0808">Transferase</keyword>
<keyword id="KW-0809">Transit peptide</keyword>
<name>AATM_CHICK</name>
<comment type="function">
    <text evidence="1">Catalyzes the irreversible transamination of the L-tryptophan metabolite L-kynurenine to form kynurenic acid (KA). As a member of the malate-aspartate shuttle, it has a key role in the intracellular NAD(H) redox balance. Is important for metabolite exchange between mitochondria and cytosol, and for amino acid metabolism.</text>
</comment>
<comment type="catalytic activity">
    <reaction evidence="2">
        <text>L-aspartate + 2-oxoglutarate = oxaloacetate + L-glutamate</text>
        <dbReference type="Rhea" id="RHEA:21824"/>
        <dbReference type="ChEBI" id="CHEBI:16452"/>
        <dbReference type="ChEBI" id="CHEBI:16810"/>
        <dbReference type="ChEBI" id="CHEBI:29985"/>
        <dbReference type="ChEBI" id="CHEBI:29991"/>
        <dbReference type="EC" id="2.6.1.1"/>
    </reaction>
</comment>
<comment type="catalytic activity">
    <reaction>
        <text>L-kynurenine + 2-oxoglutarate = kynurenate + L-glutamate + H2O</text>
        <dbReference type="Rhea" id="RHEA:65560"/>
        <dbReference type="ChEBI" id="CHEBI:15377"/>
        <dbReference type="ChEBI" id="CHEBI:16810"/>
        <dbReference type="ChEBI" id="CHEBI:29985"/>
        <dbReference type="ChEBI" id="CHEBI:57959"/>
        <dbReference type="ChEBI" id="CHEBI:58454"/>
        <dbReference type="EC" id="2.6.1.7"/>
    </reaction>
</comment>
<comment type="cofactor">
    <cofactor evidence="3 5 6 7">
        <name>pyridoxal 5'-phosphate</name>
        <dbReference type="ChEBI" id="CHEBI:597326"/>
    </cofactor>
</comment>
<comment type="subunit">
    <text evidence="3 5 6 7">Homodimer.</text>
</comment>
<comment type="subcellular location">
    <subcellularLocation>
        <location evidence="6">Mitochondrion matrix</location>
    </subcellularLocation>
</comment>
<comment type="tissue specificity">
    <text evidence="6">Detected in heart (at protein level).</text>
</comment>
<comment type="miscellaneous">
    <text>In eukaryotes there are cytoplasmic, mitochondrial and chloroplastic isozymes.</text>
</comment>
<comment type="similarity">
    <text evidence="8">Belongs to the class-I pyridoxal-phosphate-dependent aminotransferase family.</text>
</comment>
<sequence length="423" mass="47241">MALLQSRLLLSAPRRAAATARASSWWSHVEMGPPDPILGVTEAFKRDTNSKKMNLGVGAYRDDNGKSYVLNCVRKAEAMIAAKKMDKEYLPIAGLADFTRASAELALGENSEAFKSGRYVTVQGISGTGSLRVGANFLQRFFKFSRDVYLPKPSWGNHTPIFRDAGLQLQAYRYYDPKTCSLDFTGAMEDISKIPEKSIILLHACAHNPTGVDPRQEQWKELASVVKKRNLLAYFDMAYQGFASGDINRDAWALRHFIEQGIDVVLSQSYAKNMGLYGERAGAFTVICRDAEEAKRVESQLKILIRPMYSNPPMNGARIASLILNTPELRKEWLVEVKGMADRIISMRTQLVSNLKKEGSSHNWQHITDQIGMFCFTGLKPEQVERLTKEFSIYMTKDGRISVAGVASSNVGYLAHAIHQVTK</sequence>
<gene>
    <name type="primary">GOT2</name>
</gene>